<evidence type="ECO:0000250" key="1">
    <source>
        <dbReference type="UniProtKB" id="A1A5V7"/>
    </source>
</evidence>
<evidence type="ECO:0000250" key="2">
    <source>
        <dbReference type="UniProtKB" id="Q5BJD5"/>
    </source>
</evidence>
<evidence type="ECO:0000255" key="3"/>
<evidence type="ECO:0000256" key="4">
    <source>
        <dbReference type="SAM" id="MobiDB-lite"/>
    </source>
</evidence>
<evidence type="ECO:0000305" key="5"/>
<evidence type="ECO:0000312" key="6">
    <source>
        <dbReference type="RGD" id="1310870"/>
    </source>
</evidence>
<name>TM41B_RAT</name>
<comment type="function">
    <text evidence="1 2">Phospholipid scramblase involved in lipid homeostasis and membrane dynamics processes. Has phospholipid scramblase activity toward cholesterol and phosphatidylserine, as well as phosphatidylethanolamine and phosphatidylcholine. Required for autophagosome formation: participates in early stages of autophagosome biogenesis at the endoplasmic reticulum (ER) membrane by reequilibrating the leaflets of the ER as lipids are extracted by ATG2 (ATG2A or ATG2B) to mediate autophagosome assembly. In addition to autophagy, involved in other processes in which phospholipid scramblase activity is required (By similarity). Required for normal motor neuron development (By similarity).</text>
</comment>
<comment type="catalytic activity">
    <reaction evidence="2">
        <text>a 1,2-diacyl-sn-glycero-3-phospho-L-serine(in) = a 1,2-diacyl-sn-glycero-3-phospho-L-serine(out)</text>
        <dbReference type="Rhea" id="RHEA:38663"/>
        <dbReference type="ChEBI" id="CHEBI:57262"/>
    </reaction>
</comment>
<comment type="catalytic activity">
    <reaction evidence="2">
        <text>cholesterol(in) = cholesterol(out)</text>
        <dbReference type="Rhea" id="RHEA:39747"/>
        <dbReference type="ChEBI" id="CHEBI:16113"/>
    </reaction>
</comment>
<comment type="catalytic activity">
    <reaction evidence="2">
        <text>a 1,2-diacyl-sn-glycero-3-phosphocholine(in) = a 1,2-diacyl-sn-glycero-3-phosphocholine(out)</text>
        <dbReference type="Rhea" id="RHEA:38571"/>
        <dbReference type="ChEBI" id="CHEBI:57643"/>
    </reaction>
</comment>
<comment type="catalytic activity">
    <reaction evidence="2">
        <text>a 1,2-diacyl-sn-glycero-3-phosphoethanolamine(in) = a 1,2-diacyl-sn-glycero-3-phosphoethanolamine(out)</text>
        <dbReference type="Rhea" id="RHEA:38895"/>
        <dbReference type="ChEBI" id="CHEBI:64612"/>
    </reaction>
</comment>
<comment type="subunit">
    <text evidence="2">Interacts with VMP1. Interacts with COPA, COPB1, VDAC1 and ERLIN2. Interacts with ATG2A. Interacts with SURF4.</text>
</comment>
<comment type="subcellular location">
    <subcellularLocation>
        <location evidence="2">Endoplasmic reticulum membrane</location>
        <topology evidence="3">Multi-pass membrane protein</topology>
    </subcellularLocation>
    <subcellularLocation>
        <location evidence="2">Endomembrane system</location>
    </subcellularLocation>
    <text evidence="2">Localized to specific membrane structures termed mitochondria-associated membranes (MAMs) which connect the endoplasmic reticulum (ER) and the mitochondria.</text>
</comment>
<comment type="domain">
    <text evidence="2">The VTT domain was previously called the SNARE-assoc domain. As there is no evidence that this domain associates with SNARE proteins, it was renamed as VMP1, TMEM41, and TVP38 (VTT) domain.</text>
</comment>
<comment type="similarity">
    <text evidence="5">Belongs to the TMEM41 family.</text>
</comment>
<proteinExistence type="evidence at transcript level"/>
<gene>
    <name evidence="6" type="primary">Tmem41b</name>
</gene>
<protein>
    <recommendedName>
        <fullName evidence="5">Transmembrane protein 41B</fullName>
    </recommendedName>
</protein>
<reference key="1">
    <citation type="journal article" date="2004" name="Genome Res.">
        <title>The status, quality, and expansion of the NIH full-length cDNA project: the Mammalian Gene Collection (MGC).</title>
        <authorList>
            <consortium name="The MGC Project Team"/>
        </authorList>
    </citation>
    <scope>NUCLEOTIDE SEQUENCE [LARGE SCALE MRNA]</scope>
    <source>
        <tissue>Liver</tissue>
    </source>
</reference>
<accession>Q5FVN2</accession>
<sequence length="291" mass="32511">MAKGRVAERSQTEMLHSTPAGDRAVGTQGSAAPGNKDHLKEKPCVEAGSARTSLLILVSIFSCAAFVMFLVYKNFPQLSEEERVNMKVPRDMDDAKALGKVLSKYKDTFYVQVLVAYFATYIFLQTFAIPGSIFLSILSGFLYPFPLALFLVCLCSGLGASFCYMLSYLVGRPVVYKYLTEKAVKWSQQVERHREHLINYIIFLRITPFLPNWFINITSPVINVPLKVFFIGTFLGVAPPSFVAIKAGTTLYQLTTAGEAVSWNSVFILMILALLSILPAIFQKKLKQKFE</sequence>
<keyword id="KW-0072">Autophagy</keyword>
<keyword id="KW-0256">Endoplasmic reticulum</keyword>
<keyword id="KW-0445">Lipid transport</keyword>
<keyword id="KW-0472">Membrane</keyword>
<keyword id="KW-0524">Neurogenesis</keyword>
<keyword id="KW-0597">Phosphoprotein</keyword>
<keyword id="KW-1185">Reference proteome</keyword>
<keyword id="KW-0812">Transmembrane</keyword>
<keyword id="KW-1133">Transmembrane helix</keyword>
<keyword id="KW-0813">Transport</keyword>
<dbReference type="EMBL" id="BC089866">
    <property type="protein sequence ID" value="AAH89866.1"/>
    <property type="molecule type" value="mRNA"/>
</dbReference>
<dbReference type="RefSeq" id="NP_001012358.1">
    <property type="nucleotide sequence ID" value="NM_001012358.1"/>
</dbReference>
<dbReference type="SMR" id="Q5FVN2"/>
<dbReference type="FunCoup" id="Q5FVN2">
    <property type="interactions" value="2943"/>
</dbReference>
<dbReference type="STRING" id="10116.ENSRNOP00000016224"/>
<dbReference type="PhosphoSitePlus" id="Q5FVN2"/>
<dbReference type="PaxDb" id="10116-ENSRNOP00000016224"/>
<dbReference type="Ensembl" id="ENSRNOT00000016224.6">
    <property type="protein sequence ID" value="ENSRNOP00000016224.4"/>
    <property type="gene ID" value="ENSRNOG00000010752.6"/>
</dbReference>
<dbReference type="GeneID" id="361626"/>
<dbReference type="KEGG" id="rno:361626"/>
<dbReference type="UCSC" id="RGD:1310870">
    <property type="organism name" value="rat"/>
</dbReference>
<dbReference type="AGR" id="RGD:1310870"/>
<dbReference type="CTD" id="440026"/>
<dbReference type="RGD" id="1310870">
    <property type="gene designation" value="Tmem41b"/>
</dbReference>
<dbReference type="eggNOG" id="KOG3140">
    <property type="taxonomic scope" value="Eukaryota"/>
</dbReference>
<dbReference type="GeneTree" id="ENSGT00940000156956"/>
<dbReference type="HOGENOM" id="CLU_038944_0_1_1"/>
<dbReference type="InParanoid" id="Q5FVN2"/>
<dbReference type="OMA" id="CIKIPRD"/>
<dbReference type="OrthoDB" id="3364966at2759"/>
<dbReference type="PhylomeDB" id="Q5FVN2"/>
<dbReference type="TreeFam" id="TF314301"/>
<dbReference type="PRO" id="PR:Q5FVN2"/>
<dbReference type="Proteomes" id="UP000002494">
    <property type="component" value="Chromosome 1"/>
</dbReference>
<dbReference type="Bgee" id="ENSRNOG00000010752">
    <property type="expression patterns" value="Expressed in duodenum and 19 other cell types or tissues"/>
</dbReference>
<dbReference type="GO" id="GO:0005789">
    <property type="term" value="C:endoplasmic reticulum membrane"/>
    <property type="evidence" value="ECO:0000250"/>
    <property type="project" value="UniProtKB"/>
</dbReference>
<dbReference type="GO" id="GO:0044233">
    <property type="term" value="C:mitochondria-associated endoplasmic reticulum membrane contact site"/>
    <property type="evidence" value="ECO:0000250"/>
    <property type="project" value="UniProtKB"/>
</dbReference>
<dbReference type="GO" id="GO:0017128">
    <property type="term" value="F:phospholipid scramblase activity"/>
    <property type="evidence" value="ECO:0000250"/>
    <property type="project" value="UniProtKB"/>
</dbReference>
<dbReference type="GO" id="GO:0000045">
    <property type="term" value="P:autophagosome assembly"/>
    <property type="evidence" value="ECO:0000250"/>
    <property type="project" value="UniProtKB"/>
</dbReference>
<dbReference type="GO" id="GO:0032365">
    <property type="term" value="P:intracellular lipid transport"/>
    <property type="evidence" value="ECO:0000266"/>
    <property type="project" value="RGD"/>
</dbReference>
<dbReference type="GO" id="GO:0044830">
    <property type="term" value="P:modulation by host of viral RNA genome replication"/>
    <property type="evidence" value="ECO:0007669"/>
    <property type="project" value="Ensembl"/>
</dbReference>
<dbReference type="GO" id="GO:0007399">
    <property type="term" value="P:nervous system development"/>
    <property type="evidence" value="ECO:0007669"/>
    <property type="project" value="UniProtKB-KW"/>
</dbReference>
<dbReference type="InterPro" id="IPR045014">
    <property type="entry name" value="TM41A/B"/>
</dbReference>
<dbReference type="InterPro" id="IPR032816">
    <property type="entry name" value="VTT_dom"/>
</dbReference>
<dbReference type="PANTHER" id="PTHR43220">
    <property type="match status" value="1"/>
</dbReference>
<dbReference type="PANTHER" id="PTHR43220:SF18">
    <property type="entry name" value="TRANSMEMBRANE PROTEIN 41B"/>
    <property type="match status" value="1"/>
</dbReference>
<dbReference type="Pfam" id="PF09335">
    <property type="entry name" value="VTT_dom"/>
    <property type="match status" value="1"/>
</dbReference>
<feature type="chain" id="PRO_0000291940" description="Transmembrane protein 41B">
    <location>
        <begin position="1"/>
        <end position="291"/>
    </location>
</feature>
<feature type="transmembrane region" description="Helical" evidence="3">
    <location>
        <begin position="52"/>
        <end position="72"/>
    </location>
</feature>
<feature type="transmembrane region" description="Helical" evidence="3">
    <location>
        <begin position="109"/>
        <end position="129"/>
    </location>
</feature>
<feature type="transmembrane region" description="Helical" evidence="3">
    <location>
        <begin position="147"/>
        <end position="169"/>
    </location>
</feature>
<feature type="transmembrane region" description="Helical" evidence="3">
    <location>
        <begin position="197"/>
        <end position="217"/>
    </location>
</feature>
<feature type="transmembrane region" description="Helical" evidence="3">
    <location>
        <begin position="225"/>
        <end position="245"/>
    </location>
</feature>
<feature type="transmembrane region" description="Helical" evidence="3">
    <location>
        <begin position="262"/>
        <end position="282"/>
    </location>
</feature>
<feature type="region of interest" description="Disordered" evidence="4">
    <location>
        <begin position="1"/>
        <end position="38"/>
    </location>
</feature>
<feature type="region of interest" description="VTT domain; required for its function in autophagy" evidence="2">
    <location>
        <begin position="140"/>
        <end position="251"/>
    </location>
</feature>
<feature type="compositionally biased region" description="Basic and acidic residues" evidence="4">
    <location>
        <begin position="1"/>
        <end position="11"/>
    </location>
</feature>
<feature type="modified residue" description="Phosphothreonine" evidence="2">
    <location>
        <position position="18"/>
    </location>
</feature>
<organism>
    <name type="scientific">Rattus norvegicus</name>
    <name type="common">Rat</name>
    <dbReference type="NCBI Taxonomy" id="10116"/>
    <lineage>
        <taxon>Eukaryota</taxon>
        <taxon>Metazoa</taxon>
        <taxon>Chordata</taxon>
        <taxon>Craniata</taxon>
        <taxon>Vertebrata</taxon>
        <taxon>Euteleostomi</taxon>
        <taxon>Mammalia</taxon>
        <taxon>Eutheria</taxon>
        <taxon>Euarchontoglires</taxon>
        <taxon>Glires</taxon>
        <taxon>Rodentia</taxon>
        <taxon>Myomorpha</taxon>
        <taxon>Muroidea</taxon>
        <taxon>Muridae</taxon>
        <taxon>Murinae</taxon>
        <taxon>Rattus</taxon>
    </lineage>
</organism>